<evidence type="ECO:0000250" key="1">
    <source>
        <dbReference type="UniProtKB" id="Q08817"/>
    </source>
</evidence>
<evidence type="ECO:0000255" key="2"/>
<evidence type="ECO:0000256" key="3">
    <source>
        <dbReference type="SAM" id="MobiDB-lite"/>
    </source>
</evidence>
<evidence type="ECO:0000269" key="4">
    <source>
    </source>
</evidence>
<evidence type="ECO:0000269" key="5">
    <source>
    </source>
</evidence>
<evidence type="ECO:0000305" key="6"/>
<evidence type="ECO:0000312" key="7">
    <source>
        <dbReference type="EMBL" id="CAA21894.1"/>
    </source>
</evidence>
<keyword id="KW-0963">Cytoplasm</keyword>
<keyword id="KW-0433">Leucine-rich repeat</keyword>
<keyword id="KW-0539">Nucleus</keyword>
<keyword id="KW-0597">Phosphoprotein</keyword>
<keyword id="KW-1185">Reference proteome</keyword>
<keyword id="KW-0677">Repeat</keyword>
<name>SOG2_SCHPO</name>
<organism>
    <name type="scientific">Schizosaccharomyces pombe (strain 972 / ATCC 24843)</name>
    <name type="common">Fission yeast</name>
    <dbReference type="NCBI Taxonomy" id="284812"/>
    <lineage>
        <taxon>Eukaryota</taxon>
        <taxon>Fungi</taxon>
        <taxon>Dikarya</taxon>
        <taxon>Ascomycota</taxon>
        <taxon>Taphrinomycotina</taxon>
        <taxon>Schizosaccharomycetes</taxon>
        <taxon>Schizosaccharomycetales</taxon>
        <taxon>Schizosaccharomycetaceae</taxon>
        <taxon>Schizosaccharomyces</taxon>
    </lineage>
</organism>
<reference evidence="7" key="1">
    <citation type="journal article" date="2002" name="Nature">
        <title>The genome sequence of Schizosaccharomyces pombe.</title>
        <authorList>
            <person name="Wood V."/>
            <person name="Gwilliam R."/>
            <person name="Rajandream M.A."/>
            <person name="Lyne M.H."/>
            <person name="Lyne R."/>
            <person name="Stewart A."/>
            <person name="Sgouros J.G."/>
            <person name="Peat N."/>
            <person name="Hayles J."/>
            <person name="Baker S.G."/>
            <person name="Basham D."/>
            <person name="Bowman S."/>
            <person name="Brooks K."/>
            <person name="Brown D."/>
            <person name="Brown S."/>
            <person name="Chillingworth T."/>
            <person name="Churcher C.M."/>
            <person name="Collins M."/>
            <person name="Connor R."/>
            <person name="Cronin A."/>
            <person name="Davis P."/>
            <person name="Feltwell T."/>
            <person name="Fraser A."/>
            <person name="Gentles S."/>
            <person name="Goble A."/>
            <person name="Hamlin N."/>
            <person name="Harris D.E."/>
            <person name="Hidalgo J."/>
            <person name="Hodgson G."/>
            <person name="Holroyd S."/>
            <person name="Hornsby T."/>
            <person name="Howarth S."/>
            <person name="Huckle E.J."/>
            <person name="Hunt S."/>
            <person name="Jagels K."/>
            <person name="James K.D."/>
            <person name="Jones L."/>
            <person name="Jones M."/>
            <person name="Leather S."/>
            <person name="McDonald S."/>
            <person name="McLean J."/>
            <person name="Mooney P."/>
            <person name="Moule S."/>
            <person name="Mungall K.L."/>
            <person name="Murphy L.D."/>
            <person name="Niblett D."/>
            <person name="Odell C."/>
            <person name="Oliver K."/>
            <person name="O'Neil S."/>
            <person name="Pearson D."/>
            <person name="Quail M.A."/>
            <person name="Rabbinowitsch E."/>
            <person name="Rutherford K.M."/>
            <person name="Rutter S."/>
            <person name="Saunders D."/>
            <person name="Seeger K."/>
            <person name="Sharp S."/>
            <person name="Skelton J."/>
            <person name="Simmonds M.N."/>
            <person name="Squares R."/>
            <person name="Squares S."/>
            <person name="Stevens K."/>
            <person name="Taylor K."/>
            <person name="Taylor R.G."/>
            <person name="Tivey A."/>
            <person name="Walsh S.V."/>
            <person name="Warren T."/>
            <person name="Whitehead S."/>
            <person name="Woodward J.R."/>
            <person name="Volckaert G."/>
            <person name="Aert R."/>
            <person name="Robben J."/>
            <person name="Grymonprez B."/>
            <person name="Weltjens I."/>
            <person name="Vanstreels E."/>
            <person name="Rieger M."/>
            <person name="Schaefer M."/>
            <person name="Mueller-Auer S."/>
            <person name="Gabel C."/>
            <person name="Fuchs M."/>
            <person name="Duesterhoeft A."/>
            <person name="Fritzc C."/>
            <person name="Holzer E."/>
            <person name="Moestl D."/>
            <person name="Hilbert H."/>
            <person name="Borzym K."/>
            <person name="Langer I."/>
            <person name="Beck A."/>
            <person name="Lehrach H."/>
            <person name="Reinhardt R."/>
            <person name="Pohl T.M."/>
            <person name="Eger P."/>
            <person name="Zimmermann W."/>
            <person name="Wedler H."/>
            <person name="Wambutt R."/>
            <person name="Purnelle B."/>
            <person name="Goffeau A."/>
            <person name="Cadieu E."/>
            <person name="Dreano S."/>
            <person name="Gloux S."/>
            <person name="Lelaure V."/>
            <person name="Mottier S."/>
            <person name="Galibert F."/>
            <person name="Aves S.J."/>
            <person name="Xiang Z."/>
            <person name="Hunt C."/>
            <person name="Moore K."/>
            <person name="Hurst S.M."/>
            <person name="Lucas M."/>
            <person name="Rochet M."/>
            <person name="Gaillardin C."/>
            <person name="Tallada V.A."/>
            <person name="Garzon A."/>
            <person name="Thode G."/>
            <person name="Daga R.R."/>
            <person name="Cruzado L."/>
            <person name="Jimenez J."/>
            <person name="Sanchez M."/>
            <person name="del Rey F."/>
            <person name="Benito J."/>
            <person name="Dominguez A."/>
            <person name="Revuelta J.L."/>
            <person name="Moreno S."/>
            <person name="Armstrong J."/>
            <person name="Forsburg S.L."/>
            <person name="Cerutti L."/>
            <person name="Lowe T."/>
            <person name="McCombie W.R."/>
            <person name="Paulsen I."/>
            <person name="Potashkin J."/>
            <person name="Shpakovski G.V."/>
            <person name="Ussery D."/>
            <person name="Barrell B.G."/>
            <person name="Nurse P."/>
        </authorList>
    </citation>
    <scope>NUCLEOTIDE SEQUENCE [LARGE SCALE GENOMIC DNA]</scope>
    <source>
        <strain>972 / ATCC 24843</strain>
    </source>
</reference>
<reference evidence="6" key="2">
    <citation type="journal article" date="2006" name="Nat. Biotechnol.">
        <title>ORFeome cloning and global analysis of protein localization in the fission yeast Schizosaccharomyces pombe.</title>
        <authorList>
            <person name="Matsuyama A."/>
            <person name="Arai R."/>
            <person name="Yashiroda Y."/>
            <person name="Shirai A."/>
            <person name="Kamata A."/>
            <person name="Sekido S."/>
            <person name="Kobayashi Y."/>
            <person name="Hashimoto A."/>
            <person name="Hamamoto M."/>
            <person name="Hiraoka Y."/>
            <person name="Horinouchi S."/>
            <person name="Yoshida M."/>
        </authorList>
    </citation>
    <scope>SUBCELLULAR LOCATION [LARGE SCALE ANALYSIS]</scope>
</reference>
<reference key="3">
    <citation type="journal article" date="2008" name="J. Proteome Res.">
        <title>Phosphoproteome analysis of fission yeast.</title>
        <authorList>
            <person name="Wilson-Grady J.T."/>
            <person name="Villen J."/>
            <person name="Gygi S.P."/>
        </authorList>
    </citation>
    <scope>PHOSPHORYLATION [LARGE SCALE ANALYSIS] AT SER-301 AND SER-464</scope>
    <scope>IDENTIFICATION BY MASS SPECTROMETRY</scope>
</reference>
<proteinExistence type="evidence at protein level"/>
<gene>
    <name evidence="1" type="primary">sog2</name>
    <name type="ORF">SPBC887.09c</name>
</gene>
<comment type="subcellular location">
    <subcellularLocation>
        <location evidence="4">Cytoplasm</location>
    </subcellularLocation>
    <subcellularLocation>
        <location evidence="4">Nucleus</location>
    </subcellularLocation>
    <text evidence="4">Barrier septum. Cell tip.</text>
</comment>
<accession>O94294</accession>
<protein>
    <recommendedName>
        <fullName>Leucine-rich repeat-containing protein sog2</fullName>
    </recommendedName>
</protein>
<feature type="chain" id="PRO_0000312230" description="Leucine-rich repeat-containing protein sog2">
    <location>
        <begin position="1"/>
        <end position="886"/>
    </location>
</feature>
<feature type="repeat" description="LRR 1">
    <location>
        <begin position="28"/>
        <end position="49"/>
    </location>
</feature>
<feature type="repeat" description="LRR 2">
    <location>
        <begin position="53"/>
        <end position="74"/>
    </location>
</feature>
<feature type="repeat" description="LRR 3">
    <location>
        <begin position="76"/>
        <end position="97"/>
    </location>
</feature>
<feature type="repeat" description="LRR 4">
    <location>
        <begin position="99"/>
        <end position="120"/>
    </location>
</feature>
<feature type="repeat" description="LRR 5">
    <location>
        <begin position="122"/>
        <end position="143"/>
    </location>
</feature>
<feature type="repeat" description="LRR 6" evidence="2">
    <location>
        <begin position="145"/>
        <end position="166"/>
    </location>
</feature>
<feature type="region of interest" description="Disordered" evidence="3">
    <location>
        <begin position="236"/>
        <end position="288"/>
    </location>
</feature>
<feature type="region of interest" description="Disordered" evidence="3">
    <location>
        <begin position="301"/>
        <end position="364"/>
    </location>
</feature>
<feature type="region of interest" description="Disordered" evidence="3">
    <location>
        <begin position="394"/>
        <end position="431"/>
    </location>
</feature>
<feature type="region of interest" description="Disordered" evidence="3">
    <location>
        <begin position="455"/>
        <end position="483"/>
    </location>
</feature>
<feature type="compositionally biased region" description="Polar residues" evidence="3">
    <location>
        <begin position="243"/>
        <end position="277"/>
    </location>
</feature>
<feature type="compositionally biased region" description="Polar residues" evidence="3">
    <location>
        <begin position="312"/>
        <end position="347"/>
    </location>
</feature>
<feature type="compositionally biased region" description="Polar residues" evidence="3">
    <location>
        <begin position="394"/>
        <end position="406"/>
    </location>
</feature>
<feature type="compositionally biased region" description="Polar residues" evidence="3">
    <location>
        <begin position="419"/>
        <end position="431"/>
    </location>
</feature>
<feature type="modified residue" description="Phosphoserine" evidence="5">
    <location>
        <position position="301"/>
    </location>
</feature>
<feature type="modified residue" description="Phosphoserine" evidence="5">
    <location>
        <position position="464"/>
    </location>
</feature>
<sequence length="886" mass="96993">MSAHEVSSTKNSEIERIIKEAEDAGPENALTLDLSHLNLRELPYEQLERIQGRIARLALGHNFIKSIGPEILKFTRLRYLNIRSNVLREFPESLCRLESLEILDISRNKIKQLPESFGALMNLKVLSISKNRLFELPTYIAHMPNLEILKIENNHIVFPPPHIANNDLQDSDMQLFIANIKGYLSRNESVFRTRSESTVSAALSASANLSHSEENDSSVVDSYLFSAPSDTSHAVSPGMLTFVTPSPHSHSPAGHQQSTPKSTLSKTNENSEGTLYDSNVAHGCTHPPSLNQLNKFHLDASPRQARPRRSVSLATGLNSPSVSKPPSSATGPLYHSPQSSLTNSSVASADVQERTHNTNGASPIQDQISEFTDQHQNPSNNDAASTQSILKTAPTQLSASAKTSAISLPEVAKKERNRSNSTNDDYSSTRLPSSVLHRLEALKEARKLSEQLPNRIFAQDPHPSPRLKKEETHENGSNLTNDSVNSYFSNIGGSEVEMKHSAFEKTLESSRGILFSLSQVQQALRQQLLFCSNPVVLDSMRHVLHTANVQIKRLILCFEDTQQSNDGTANINSIVNASLSCISSFRKLIEVTKKFLNELTSRADVRYVRLLLLILFDAAKELQNALVPLSPSQPHSGNNIFADQVRQSPTSMIRTASGLTNRIVSVEKPASVMNPEIDKQIQDQVALATNSAMSVLTLLIDAVPKNNQPDLVNENIAPNLISKLRELGSLSAAACDVTRKLKHRLLTFQTNPEELEWQLFLDDTQAFVKSIIAVANLAKALSSEYTFQKSVLAGLSAATRSTKDLTILLSSSARHYTESSLATPVPLMSPIARVPATPLSAALGSAAQSITSPLIMSPAAIPASAYSTNKIDYFTDADGNVEGLQR</sequence>
<dbReference type="EMBL" id="CU329671">
    <property type="protein sequence ID" value="CAA21894.1"/>
    <property type="molecule type" value="Genomic_DNA"/>
</dbReference>
<dbReference type="PIR" id="T40734">
    <property type="entry name" value="T40734"/>
</dbReference>
<dbReference type="RefSeq" id="NP_596483.1">
    <property type="nucleotide sequence ID" value="NM_001022403.2"/>
</dbReference>
<dbReference type="SMR" id="O94294"/>
<dbReference type="BioGRID" id="277685">
    <property type="interactions" value="9"/>
</dbReference>
<dbReference type="STRING" id="284812.O94294"/>
<dbReference type="iPTMnet" id="O94294"/>
<dbReference type="PaxDb" id="4896-SPBC887.09c.1"/>
<dbReference type="EnsemblFungi" id="SPBC887.09c.1">
    <property type="protein sequence ID" value="SPBC887.09c.1:pep"/>
    <property type="gene ID" value="SPBC887.09c"/>
</dbReference>
<dbReference type="GeneID" id="2541171"/>
<dbReference type="KEGG" id="spo:2541171"/>
<dbReference type="PomBase" id="SPBC887.09c">
    <property type="gene designation" value="sog2"/>
</dbReference>
<dbReference type="VEuPathDB" id="FungiDB:SPBC887.09c"/>
<dbReference type="eggNOG" id="KOG0619">
    <property type="taxonomic scope" value="Eukaryota"/>
</dbReference>
<dbReference type="HOGENOM" id="CLU_015898_0_0_1"/>
<dbReference type="InParanoid" id="O94294"/>
<dbReference type="OMA" id="NDENEWQ"/>
<dbReference type="PhylomeDB" id="O94294"/>
<dbReference type="Reactome" id="R-SPO-983168">
    <property type="pathway name" value="Antigen processing: Ubiquitination &amp; Proteasome degradation"/>
</dbReference>
<dbReference type="PRO" id="PR:O94294"/>
<dbReference type="Proteomes" id="UP000002485">
    <property type="component" value="Chromosome II"/>
</dbReference>
<dbReference type="GO" id="GO:0032153">
    <property type="term" value="C:cell division site"/>
    <property type="evidence" value="ECO:0000314"/>
    <property type="project" value="PomBase"/>
</dbReference>
<dbReference type="GO" id="GO:0051286">
    <property type="term" value="C:cell tip"/>
    <property type="evidence" value="ECO:0007005"/>
    <property type="project" value="PomBase"/>
</dbReference>
<dbReference type="GO" id="GO:0005737">
    <property type="term" value="C:cytoplasm"/>
    <property type="evidence" value="ECO:0000314"/>
    <property type="project" value="PomBase"/>
</dbReference>
<dbReference type="GO" id="GO:0005829">
    <property type="term" value="C:cytosol"/>
    <property type="evidence" value="ECO:0007005"/>
    <property type="project" value="PomBase"/>
</dbReference>
<dbReference type="GO" id="GO:0044732">
    <property type="term" value="C:mitotic spindle pole body"/>
    <property type="evidence" value="ECO:0000314"/>
    <property type="project" value="PomBase"/>
</dbReference>
<dbReference type="GO" id="GO:0005634">
    <property type="term" value="C:nucleus"/>
    <property type="evidence" value="ECO:0007005"/>
    <property type="project" value="PomBase"/>
</dbReference>
<dbReference type="GO" id="GO:0035591">
    <property type="term" value="F:signaling adaptor activity"/>
    <property type="evidence" value="ECO:0000269"/>
    <property type="project" value="PomBase"/>
</dbReference>
<dbReference type="GO" id="GO:0061173">
    <property type="term" value="P:positive regulation of establishment of bipolar cell polarity"/>
    <property type="evidence" value="ECO:0000315"/>
    <property type="project" value="PomBase"/>
</dbReference>
<dbReference type="GO" id="GO:0062200">
    <property type="term" value="P:RAM/MOR signaling"/>
    <property type="evidence" value="ECO:0000315"/>
    <property type="project" value="PomBase"/>
</dbReference>
<dbReference type="Gene3D" id="3.80.10.10">
    <property type="entry name" value="Ribonuclease Inhibitor"/>
    <property type="match status" value="1"/>
</dbReference>
<dbReference type="InterPro" id="IPR001611">
    <property type="entry name" value="Leu-rich_rpt"/>
</dbReference>
<dbReference type="InterPro" id="IPR003591">
    <property type="entry name" value="Leu-rich_rpt_typical-subtyp"/>
</dbReference>
<dbReference type="InterPro" id="IPR032675">
    <property type="entry name" value="LRR_dom_sf"/>
</dbReference>
<dbReference type="InterPro" id="IPR050216">
    <property type="entry name" value="LRR_domain-containing"/>
</dbReference>
<dbReference type="InterPro" id="IPR055414">
    <property type="entry name" value="LRR_R13L4/SHOC2-like"/>
</dbReference>
<dbReference type="InterPro" id="IPR019487">
    <property type="entry name" value="RAM_signalling_pathway_SOG2"/>
</dbReference>
<dbReference type="PANTHER" id="PTHR48051">
    <property type="match status" value="1"/>
</dbReference>
<dbReference type="PANTHER" id="PTHR48051:SF46">
    <property type="entry name" value="LEUCINE RICH REPEAT-CONTAINING DOMAIN PROTEIN"/>
    <property type="match status" value="1"/>
</dbReference>
<dbReference type="Pfam" id="PF23598">
    <property type="entry name" value="LRR_14"/>
    <property type="match status" value="1"/>
</dbReference>
<dbReference type="Pfam" id="PF10428">
    <property type="entry name" value="SOG2"/>
    <property type="match status" value="2"/>
</dbReference>
<dbReference type="SMART" id="SM00364">
    <property type="entry name" value="LRR_BAC"/>
    <property type="match status" value="3"/>
</dbReference>
<dbReference type="SMART" id="SM00369">
    <property type="entry name" value="LRR_TYP"/>
    <property type="match status" value="4"/>
</dbReference>
<dbReference type="SUPFAM" id="SSF52058">
    <property type="entry name" value="L domain-like"/>
    <property type="match status" value="1"/>
</dbReference>
<dbReference type="PROSITE" id="PS51450">
    <property type="entry name" value="LRR"/>
    <property type="match status" value="7"/>
</dbReference>